<gene>
    <name evidence="1" type="primary">pyrF</name>
    <name type="ordered locus">SNSL254_A1831</name>
</gene>
<protein>
    <recommendedName>
        <fullName evidence="1">Orotidine 5'-phosphate decarboxylase</fullName>
        <ecNumber evidence="1">4.1.1.23</ecNumber>
    </recommendedName>
    <alternativeName>
        <fullName evidence="1">OMP decarboxylase</fullName>
        <shortName evidence="1">OMPDCase</shortName>
        <shortName evidence="1">OMPdecase</shortName>
    </alternativeName>
</protein>
<organism>
    <name type="scientific">Salmonella newport (strain SL254)</name>
    <dbReference type="NCBI Taxonomy" id="423368"/>
    <lineage>
        <taxon>Bacteria</taxon>
        <taxon>Pseudomonadati</taxon>
        <taxon>Pseudomonadota</taxon>
        <taxon>Gammaproteobacteria</taxon>
        <taxon>Enterobacterales</taxon>
        <taxon>Enterobacteriaceae</taxon>
        <taxon>Salmonella</taxon>
    </lineage>
</organism>
<proteinExistence type="inferred from homology"/>
<keyword id="KW-0210">Decarboxylase</keyword>
<keyword id="KW-0456">Lyase</keyword>
<keyword id="KW-0665">Pyrimidine biosynthesis</keyword>
<comment type="function">
    <text evidence="1">Catalyzes the decarboxylation of orotidine 5'-monophosphate (OMP) to uridine 5'-monophosphate (UMP).</text>
</comment>
<comment type="catalytic activity">
    <reaction evidence="1">
        <text>orotidine 5'-phosphate + H(+) = UMP + CO2</text>
        <dbReference type="Rhea" id="RHEA:11596"/>
        <dbReference type="ChEBI" id="CHEBI:15378"/>
        <dbReference type="ChEBI" id="CHEBI:16526"/>
        <dbReference type="ChEBI" id="CHEBI:57538"/>
        <dbReference type="ChEBI" id="CHEBI:57865"/>
        <dbReference type="EC" id="4.1.1.23"/>
    </reaction>
</comment>
<comment type="pathway">
    <text evidence="1">Pyrimidine metabolism; UMP biosynthesis via de novo pathway; UMP from orotate: step 2/2.</text>
</comment>
<comment type="subunit">
    <text evidence="1">Homodimer.</text>
</comment>
<comment type="similarity">
    <text evidence="1">Belongs to the OMP decarboxylase family. Type 1 subfamily.</text>
</comment>
<evidence type="ECO:0000255" key="1">
    <source>
        <dbReference type="HAMAP-Rule" id="MF_01200"/>
    </source>
</evidence>
<feature type="chain" id="PRO_1000138556" description="Orotidine 5'-phosphate decarboxylase">
    <location>
        <begin position="1"/>
        <end position="245"/>
    </location>
</feature>
<feature type="active site" description="Proton donor" evidence="1">
    <location>
        <position position="73"/>
    </location>
</feature>
<feature type="binding site" evidence="1">
    <location>
        <position position="22"/>
    </location>
    <ligand>
        <name>substrate</name>
    </ligand>
</feature>
<feature type="binding site" evidence="1">
    <location>
        <position position="44"/>
    </location>
    <ligand>
        <name>substrate</name>
    </ligand>
</feature>
<feature type="binding site" evidence="1">
    <location>
        <begin position="71"/>
        <end position="80"/>
    </location>
    <ligand>
        <name>substrate</name>
    </ligand>
</feature>
<feature type="binding site" evidence="1">
    <location>
        <position position="131"/>
    </location>
    <ligand>
        <name>substrate</name>
    </ligand>
</feature>
<feature type="binding site" evidence="1">
    <location>
        <position position="192"/>
    </location>
    <ligand>
        <name>substrate</name>
    </ligand>
</feature>
<feature type="binding site" evidence="1">
    <location>
        <position position="201"/>
    </location>
    <ligand>
        <name>substrate</name>
    </ligand>
</feature>
<feature type="binding site" evidence="1">
    <location>
        <position position="221"/>
    </location>
    <ligand>
        <name>substrate</name>
    </ligand>
</feature>
<feature type="binding site" evidence="1">
    <location>
        <position position="222"/>
    </location>
    <ligand>
        <name>substrate</name>
    </ligand>
</feature>
<accession>B4T6V0</accession>
<dbReference type="EC" id="4.1.1.23" evidence="1"/>
<dbReference type="EMBL" id="CP001113">
    <property type="protein sequence ID" value="ACF63429.1"/>
    <property type="molecule type" value="Genomic_DNA"/>
</dbReference>
<dbReference type="RefSeq" id="WP_001669189.1">
    <property type="nucleotide sequence ID" value="NZ_CCMR01000003.1"/>
</dbReference>
<dbReference type="SMR" id="B4T6V0"/>
<dbReference type="KEGG" id="see:SNSL254_A1831"/>
<dbReference type="HOGENOM" id="CLU_067069_0_0_6"/>
<dbReference type="UniPathway" id="UPA00070">
    <property type="reaction ID" value="UER00120"/>
</dbReference>
<dbReference type="Proteomes" id="UP000008824">
    <property type="component" value="Chromosome"/>
</dbReference>
<dbReference type="GO" id="GO:0005829">
    <property type="term" value="C:cytosol"/>
    <property type="evidence" value="ECO:0007669"/>
    <property type="project" value="TreeGrafter"/>
</dbReference>
<dbReference type="GO" id="GO:0004590">
    <property type="term" value="F:orotidine-5'-phosphate decarboxylase activity"/>
    <property type="evidence" value="ECO:0007669"/>
    <property type="project" value="UniProtKB-UniRule"/>
</dbReference>
<dbReference type="GO" id="GO:0006207">
    <property type="term" value="P:'de novo' pyrimidine nucleobase biosynthetic process"/>
    <property type="evidence" value="ECO:0007669"/>
    <property type="project" value="InterPro"/>
</dbReference>
<dbReference type="GO" id="GO:0044205">
    <property type="term" value="P:'de novo' UMP biosynthetic process"/>
    <property type="evidence" value="ECO:0007669"/>
    <property type="project" value="UniProtKB-UniRule"/>
</dbReference>
<dbReference type="CDD" id="cd04725">
    <property type="entry name" value="OMP_decarboxylase_like"/>
    <property type="match status" value="1"/>
</dbReference>
<dbReference type="FunFam" id="3.20.20.70:FF:000015">
    <property type="entry name" value="Orotidine 5'-phosphate decarboxylase"/>
    <property type="match status" value="1"/>
</dbReference>
<dbReference type="Gene3D" id="3.20.20.70">
    <property type="entry name" value="Aldolase class I"/>
    <property type="match status" value="1"/>
</dbReference>
<dbReference type="HAMAP" id="MF_01200_B">
    <property type="entry name" value="OMPdecase_type1_B"/>
    <property type="match status" value="1"/>
</dbReference>
<dbReference type="InterPro" id="IPR013785">
    <property type="entry name" value="Aldolase_TIM"/>
</dbReference>
<dbReference type="InterPro" id="IPR014732">
    <property type="entry name" value="OMPdecase"/>
</dbReference>
<dbReference type="InterPro" id="IPR018089">
    <property type="entry name" value="OMPdecase_AS"/>
</dbReference>
<dbReference type="InterPro" id="IPR047596">
    <property type="entry name" value="OMPdecase_bac"/>
</dbReference>
<dbReference type="InterPro" id="IPR001754">
    <property type="entry name" value="OMPdeCOase_dom"/>
</dbReference>
<dbReference type="InterPro" id="IPR011060">
    <property type="entry name" value="RibuloseP-bd_barrel"/>
</dbReference>
<dbReference type="NCBIfam" id="NF001273">
    <property type="entry name" value="PRK00230.1"/>
    <property type="match status" value="1"/>
</dbReference>
<dbReference type="NCBIfam" id="TIGR01740">
    <property type="entry name" value="pyrF"/>
    <property type="match status" value="1"/>
</dbReference>
<dbReference type="PANTHER" id="PTHR32119">
    <property type="entry name" value="OROTIDINE 5'-PHOSPHATE DECARBOXYLASE"/>
    <property type="match status" value="1"/>
</dbReference>
<dbReference type="PANTHER" id="PTHR32119:SF2">
    <property type="entry name" value="OROTIDINE 5'-PHOSPHATE DECARBOXYLASE"/>
    <property type="match status" value="1"/>
</dbReference>
<dbReference type="Pfam" id="PF00215">
    <property type="entry name" value="OMPdecase"/>
    <property type="match status" value="1"/>
</dbReference>
<dbReference type="SMART" id="SM00934">
    <property type="entry name" value="OMPdecase"/>
    <property type="match status" value="1"/>
</dbReference>
<dbReference type="SUPFAM" id="SSF51366">
    <property type="entry name" value="Ribulose-phoshate binding barrel"/>
    <property type="match status" value="1"/>
</dbReference>
<dbReference type="PROSITE" id="PS00156">
    <property type="entry name" value="OMPDECASE"/>
    <property type="match status" value="1"/>
</dbReference>
<name>PYRF_SALNS</name>
<sequence>MTFTASSSSCAITESPVVVALDYHERDKALAFVDKIDPRDCRLKVGKEMFTLFGPQLVRDLQQRGFDVFLDLKFHDIPNTTARAVAAAADLGVWMVNVHASGGARMMAAARDALAPFGKDAPLLIAVTVLTSMETSDLHDLGVTLSPAEHAERLARLTQQCGLDGVVCSAQEAVRFKQVFGAAFKLVTPGIRPAGSEAGDQRRIMTPEQALSAGVDYMVIGRPVTQSVDPAQTLKDINASLKREA</sequence>
<reference key="1">
    <citation type="journal article" date="2011" name="J. Bacteriol.">
        <title>Comparative genomics of 28 Salmonella enterica isolates: evidence for CRISPR-mediated adaptive sublineage evolution.</title>
        <authorList>
            <person name="Fricke W.F."/>
            <person name="Mammel M.K."/>
            <person name="McDermott P.F."/>
            <person name="Tartera C."/>
            <person name="White D.G."/>
            <person name="Leclerc J.E."/>
            <person name="Ravel J."/>
            <person name="Cebula T.A."/>
        </authorList>
    </citation>
    <scope>NUCLEOTIDE SEQUENCE [LARGE SCALE GENOMIC DNA]</scope>
    <source>
        <strain>SL254</strain>
    </source>
</reference>